<evidence type="ECO:0000255" key="1">
    <source>
        <dbReference type="HAMAP-Rule" id="MF_01011"/>
    </source>
</evidence>
<protein>
    <recommendedName>
        <fullName evidence="1">tRNA/tmRNA (uracil-C(5))-methyltransferase</fullName>
        <ecNumber evidence="1">2.1.1.-</ecNumber>
        <ecNumber evidence="1">2.1.1.35</ecNumber>
    </recommendedName>
    <alternativeName>
        <fullName evidence="1">tRNA (uracil(54)-C(5))-methyltransferase</fullName>
    </alternativeName>
    <alternativeName>
        <fullName evidence="1">tRNA(m5U54)-methyltransferase</fullName>
        <shortName evidence="1">RUMT</shortName>
    </alternativeName>
    <alternativeName>
        <fullName evidence="1">tmRNA (uracil(341)-C(5))-methyltransferase</fullName>
    </alternativeName>
</protein>
<keyword id="KW-0489">Methyltransferase</keyword>
<keyword id="KW-0949">S-adenosyl-L-methionine</keyword>
<keyword id="KW-0808">Transferase</keyword>
<keyword id="KW-0819">tRNA processing</keyword>
<organism>
    <name type="scientific">Escherichia coli (strain K12 / MC4100 / BW2952)</name>
    <dbReference type="NCBI Taxonomy" id="595496"/>
    <lineage>
        <taxon>Bacteria</taxon>
        <taxon>Pseudomonadati</taxon>
        <taxon>Pseudomonadota</taxon>
        <taxon>Gammaproteobacteria</taxon>
        <taxon>Enterobacterales</taxon>
        <taxon>Enterobacteriaceae</taxon>
        <taxon>Escherichia</taxon>
    </lineage>
</organism>
<reference key="1">
    <citation type="journal article" date="2009" name="J. Bacteriol.">
        <title>Genomic sequencing reveals regulatory mutations and recombinational events in the widely used MC4100 lineage of Escherichia coli K-12.</title>
        <authorList>
            <person name="Ferenci T."/>
            <person name="Zhou Z."/>
            <person name="Betteridge T."/>
            <person name="Ren Y."/>
            <person name="Liu Y."/>
            <person name="Feng L."/>
            <person name="Reeves P.R."/>
            <person name="Wang L."/>
        </authorList>
    </citation>
    <scope>NUCLEOTIDE SEQUENCE [LARGE SCALE GENOMIC DNA]</scope>
    <source>
        <strain>K12 / MC4100 / BW2952</strain>
    </source>
</reference>
<comment type="function">
    <text evidence="1">Dual-specificity methyltransferase that catalyzes the formation of 5-methyluridine at position 54 (m5U54) in all tRNAs, and that of position 341 (m5U341) in tmRNA (transfer-mRNA).</text>
</comment>
<comment type="catalytic activity">
    <reaction evidence="1">
        <text>uridine(54) in tRNA + S-adenosyl-L-methionine = 5-methyluridine(54) in tRNA + S-adenosyl-L-homocysteine + H(+)</text>
        <dbReference type="Rhea" id="RHEA:42712"/>
        <dbReference type="Rhea" id="RHEA-COMP:10167"/>
        <dbReference type="Rhea" id="RHEA-COMP:10193"/>
        <dbReference type="ChEBI" id="CHEBI:15378"/>
        <dbReference type="ChEBI" id="CHEBI:57856"/>
        <dbReference type="ChEBI" id="CHEBI:59789"/>
        <dbReference type="ChEBI" id="CHEBI:65315"/>
        <dbReference type="ChEBI" id="CHEBI:74447"/>
        <dbReference type="EC" id="2.1.1.35"/>
    </reaction>
</comment>
<comment type="catalytic activity">
    <reaction evidence="1">
        <text>uridine(341) in tmRNA + S-adenosyl-L-methionine = 5-methyluridine(341) in tmRNA + S-adenosyl-L-homocysteine + H(+)</text>
        <dbReference type="Rhea" id="RHEA:43612"/>
        <dbReference type="Rhea" id="RHEA-COMP:10630"/>
        <dbReference type="Rhea" id="RHEA-COMP:10631"/>
        <dbReference type="ChEBI" id="CHEBI:15378"/>
        <dbReference type="ChEBI" id="CHEBI:57856"/>
        <dbReference type="ChEBI" id="CHEBI:59789"/>
        <dbReference type="ChEBI" id="CHEBI:65315"/>
        <dbReference type="ChEBI" id="CHEBI:74447"/>
    </reaction>
</comment>
<comment type="similarity">
    <text evidence="1">Belongs to the class I-like SAM-binding methyltransferase superfamily. RNA M5U methyltransferase family. TrmA subfamily.</text>
</comment>
<dbReference type="EC" id="2.1.1.-" evidence="1"/>
<dbReference type="EC" id="2.1.1.35" evidence="1"/>
<dbReference type="EMBL" id="CP001396">
    <property type="protein sequence ID" value="ACR65706.1"/>
    <property type="molecule type" value="Genomic_DNA"/>
</dbReference>
<dbReference type="RefSeq" id="WP_000187022.1">
    <property type="nucleotide sequence ID" value="NC_012759.1"/>
</dbReference>
<dbReference type="SMR" id="C5A0R4"/>
<dbReference type="GeneID" id="75203203"/>
<dbReference type="KEGG" id="ebw:BWG_3633"/>
<dbReference type="HOGENOM" id="CLU_043022_0_0_6"/>
<dbReference type="GO" id="GO:0005829">
    <property type="term" value="C:cytosol"/>
    <property type="evidence" value="ECO:0007669"/>
    <property type="project" value="TreeGrafter"/>
</dbReference>
<dbReference type="GO" id="GO:0019843">
    <property type="term" value="F:rRNA binding"/>
    <property type="evidence" value="ECO:0007669"/>
    <property type="project" value="TreeGrafter"/>
</dbReference>
<dbReference type="GO" id="GO:0030697">
    <property type="term" value="F:tRNA (uracil(54)-C5)-methyltransferase activity, S-adenosyl methionine-dependent"/>
    <property type="evidence" value="ECO:0007669"/>
    <property type="project" value="UniProtKB-UniRule"/>
</dbReference>
<dbReference type="GO" id="GO:0000049">
    <property type="term" value="F:tRNA binding"/>
    <property type="evidence" value="ECO:0007669"/>
    <property type="project" value="TreeGrafter"/>
</dbReference>
<dbReference type="GO" id="GO:0030488">
    <property type="term" value="P:tRNA methylation"/>
    <property type="evidence" value="ECO:0007669"/>
    <property type="project" value="UniProtKB-UniRule"/>
</dbReference>
<dbReference type="CDD" id="cd02440">
    <property type="entry name" value="AdoMet_MTases"/>
    <property type="match status" value="1"/>
</dbReference>
<dbReference type="FunFam" id="2.40.50.1070:FF:000001">
    <property type="entry name" value="tRNA/tmRNA (uracil-C(5))-methyltransferase"/>
    <property type="match status" value="1"/>
</dbReference>
<dbReference type="FunFam" id="3.40.50.150:FF:000012">
    <property type="entry name" value="tRNA/tmRNA (uracil-C(5))-methyltransferase"/>
    <property type="match status" value="1"/>
</dbReference>
<dbReference type="Gene3D" id="2.40.50.1070">
    <property type="match status" value="1"/>
</dbReference>
<dbReference type="Gene3D" id="3.40.50.150">
    <property type="entry name" value="Vaccinia Virus protein VP39"/>
    <property type="match status" value="1"/>
</dbReference>
<dbReference type="HAMAP" id="MF_01011">
    <property type="entry name" value="RNA_methyltr_TrmA"/>
    <property type="match status" value="1"/>
</dbReference>
<dbReference type="InterPro" id="IPR030390">
    <property type="entry name" value="MeTrfase_TrmA_AS"/>
</dbReference>
<dbReference type="InterPro" id="IPR030391">
    <property type="entry name" value="MeTrfase_TrmA_CS"/>
</dbReference>
<dbReference type="InterPro" id="IPR029063">
    <property type="entry name" value="SAM-dependent_MTases_sf"/>
</dbReference>
<dbReference type="InterPro" id="IPR011869">
    <property type="entry name" value="TrmA_MeTrfase"/>
</dbReference>
<dbReference type="InterPro" id="IPR010280">
    <property type="entry name" value="U5_MeTrfase_fam"/>
</dbReference>
<dbReference type="NCBIfam" id="TIGR02143">
    <property type="entry name" value="trmA_only"/>
    <property type="match status" value="1"/>
</dbReference>
<dbReference type="PANTHER" id="PTHR47790">
    <property type="entry name" value="TRNA/TMRNA (URACIL-C(5))-METHYLTRANSFERASE"/>
    <property type="match status" value="1"/>
</dbReference>
<dbReference type="PANTHER" id="PTHR47790:SF2">
    <property type="entry name" value="TRNA_TMRNA (URACIL-C(5))-METHYLTRANSFERASE"/>
    <property type="match status" value="1"/>
</dbReference>
<dbReference type="Pfam" id="PF05958">
    <property type="entry name" value="tRNA_U5-meth_tr"/>
    <property type="match status" value="1"/>
</dbReference>
<dbReference type="SUPFAM" id="SSF53335">
    <property type="entry name" value="S-adenosyl-L-methionine-dependent methyltransferases"/>
    <property type="match status" value="1"/>
</dbReference>
<dbReference type="PROSITE" id="PS51687">
    <property type="entry name" value="SAM_MT_RNA_M5U"/>
    <property type="match status" value="1"/>
</dbReference>
<dbReference type="PROSITE" id="PS01230">
    <property type="entry name" value="TRMA_1"/>
    <property type="match status" value="1"/>
</dbReference>
<dbReference type="PROSITE" id="PS01231">
    <property type="entry name" value="TRMA_2"/>
    <property type="match status" value="1"/>
</dbReference>
<proteinExistence type="inferred from homology"/>
<feature type="chain" id="PRO_1000213196" description="tRNA/tmRNA (uracil-C(5))-methyltransferase">
    <location>
        <begin position="1"/>
        <end position="366"/>
    </location>
</feature>
<feature type="active site" description="Nucleophile" evidence="1">
    <location>
        <position position="324"/>
    </location>
</feature>
<feature type="active site" description="Proton acceptor" evidence="1">
    <location>
        <position position="358"/>
    </location>
</feature>
<feature type="binding site" evidence="1">
    <location>
        <position position="190"/>
    </location>
    <ligand>
        <name>S-adenosyl-L-methionine</name>
        <dbReference type="ChEBI" id="CHEBI:59789"/>
    </ligand>
</feature>
<feature type="binding site" evidence="1">
    <location>
        <position position="218"/>
    </location>
    <ligand>
        <name>S-adenosyl-L-methionine</name>
        <dbReference type="ChEBI" id="CHEBI:59789"/>
    </ligand>
</feature>
<feature type="binding site" evidence="1">
    <location>
        <position position="223"/>
    </location>
    <ligand>
        <name>S-adenosyl-L-methionine</name>
        <dbReference type="ChEBI" id="CHEBI:59789"/>
    </ligand>
</feature>
<feature type="binding site" evidence="1">
    <location>
        <position position="239"/>
    </location>
    <ligand>
        <name>S-adenosyl-L-methionine</name>
        <dbReference type="ChEBI" id="CHEBI:59789"/>
    </ligand>
</feature>
<feature type="binding site" evidence="1">
    <location>
        <position position="299"/>
    </location>
    <ligand>
        <name>S-adenosyl-L-methionine</name>
        <dbReference type="ChEBI" id="CHEBI:59789"/>
    </ligand>
</feature>
<name>TRMA_ECOBW</name>
<sequence>MTPEHLPTEQYEAQLAEKVVRLQSMMAPFSDLVPEVFRSPVSHYRMRAEFRIWHDGDDLYHIIFDQQTKSRIRVDSFPAASELINQLMTAMIAGVRNNPVLRHKLFQIDYLTTLSNQAVVSLLYHKKLDDEWRQEAEALRDALRAQNLNVHLIGRATKTKIELDQDYIDERLPVAGKEMIYRQVENSFTQPNAAMNIQMLEWALDVTKGSKGDLLELYCGNGNFSLALARNFDRVLATEIAKPSVAAAQYNIAANHIDNVQIIRMAAEEFTQAMNGVREFNRLQGIDLKSYQCETIFVDPPRSGLDSETEKMVQAYPRILYISCNPETLCKNLETLSQTHKVERLALFDQFPYTHHMECGVLLTAK</sequence>
<accession>C5A0R4</accession>
<gene>
    <name evidence="1" type="primary">trmA</name>
    <name type="ordered locus">BWG_3633</name>
</gene>